<proteinExistence type="evidence at transcript level"/>
<accession>P62205</accession>
<sequence>MAQVAGKKLTVAPEAGKPPGIPGSSSSVKEIPEILVDPRTRRRYLRGRFLGKGGFAKCYEITDLESREVFAGKIVPKTMLLKPHQKDKMTMEIAIQRSLDHRHVVGFHGFFEDNDFVYVVLELCRRRSLLELHKRRKAVTEPEARYYLKQTILGCQYLHSNRVIHRDLKLGNLFLNDEMEVKIGDFGLATKVEYDGERKKTLCGTPNYIAPEVLGKKGHSFEVDIWSIGCIMYTLLVGKPPFETSCLKETYMRIKKNEYSVPKHINPMATALIQKMLRSEPTSRPTIDDLLNDEFFTTGYIPSRLPTTCLTVPPRFSIAPSTIDQSLRKPLTAINKGQDSPLVEKQSVPAKEEEMQQPESTEPADCYLSEMLQQLTCVNAVKPSERAVIRQEEAEDPASVPIFWVSKWVDYSDKYGLGYQLCDNSVGVLFNDSTRLIMYNDGDSLQYIERNNSESYLNVRSYPAALTKKITLLKYFRNYMSEHLLKAGANITPREGDELARLPFLRTWFRTRSAIILHLSNGTVQINFFQDHTKIILCPLMAAVSYIDEKREFHTYKLSLIQEFGCCKELASRLRYARTMVEKLQSSKSGVAHVKASA</sequence>
<reference key="1">
    <citation type="submission" date="2004-03" db="EMBL/GenBank/DDBJ databases">
        <authorList>
            <consortium name="NIH - Xenopus Gene Collection (XGC) project"/>
        </authorList>
    </citation>
    <scope>NUCLEOTIDE SEQUENCE [LARGE SCALE MRNA]</scope>
    <source>
        <tissue>Embryo</tissue>
    </source>
</reference>
<evidence type="ECO:0000250" key="1"/>
<evidence type="ECO:0000250" key="2">
    <source>
        <dbReference type="UniProtKB" id="P70032"/>
    </source>
</evidence>
<evidence type="ECO:0000255" key="3">
    <source>
        <dbReference type="PROSITE-ProRule" id="PRU00154"/>
    </source>
</evidence>
<evidence type="ECO:0000255" key="4">
    <source>
        <dbReference type="PROSITE-ProRule" id="PRU00159"/>
    </source>
</evidence>
<evidence type="ECO:0000255" key="5">
    <source>
        <dbReference type="PROSITE-ProRule" id="PRU10027"/>
    </source>
</evidence>
<evidence type="ECO:0000256" key="6">
    <source>
        <dbReference type="SAM" id="MobiDB-lite"/>
    </source>
</evidence>
<dbReference type="EC" id="2.7.11.21"/>
<dbReference type="EMBL" id="BC067963">
    <property type="protein sequence ID" value="AAH67963.1"/>
    <property type="molecule type" value="mRNA"/>
</dbReference>
<dbReference type="RefSeq" id="NP_998844.1">
    <property type="nucleotide sequence ID" value="NM_213679.2"/>
</dbReference>
<dbReference type="SMR" id="P62205"/>
<dbReference type="FunCoup" id="P62205">
    <property type="interactions" value="1565"/>
</dbReference>
<dbReference type="STRING" id="8364.ENSXETP00000022863"/>
<dbReference type="PaxDb" id="8364-ENSXETP00000022754"/>
<dbReference type="DNASU" id="407937"/>
<dbReference type="GeneID" id="407937"/>
<dbReference type="KEGG" id="xtr:407937"/>
<dbReference type="AGR" id="Xenbase:XB-GENE-941540"/>
<dbReference type="CTD" id="5347"/>
<dbReference type="Xenbase" id="XB-GENE-941540">
    <property type="gene designation" value="plk1"/>
</dbReference>
<dbReference type="eggNOG" id="KOG0575">
    <property type="taxonomic scope" value="Eukaryota"/>
</dbReference>
<dbReference type="HOGENOM" id="CLU_000288_46_1_1"/>
<dbReference type="InParanoid" id="P62205"/>
<dbReference type="OMA" id="IQIHKSM"/>
<dbReference type="OrthoDB" id="408964at2759"/>
<dbReference type="PhylomeDB" id="P62205"/>
<dbReference type="Reactome" id="R-XTR-141444">
    <property type="pathway name" value="Amplification of signal from unattached kinetochores via a MAD2 inhibitory signal"/>
</dbReference>
<dbReference type="Reactome" id="R-XTR-156711">
    <property type="pathway name" value="Polo-like kinase mediated events"/>
</dbReference>
<dbReference type="Reactome" id="R-XTR-162658">
    <property type="pathway name" value="Golgi Cisternae Pericentriolar Stack Reorganization"/>
</dbReference>
<dbReference type="Reactome" id="R-XTR-174178">
    <property type="pathway name" value="APC/C:Cdh1 mediated degradation of Cdc20 and other APC/C:Cdh1 targeted proteins in late mitosis/early G1"/>
</dbReference>
<dbReference type="Reactome" id="R-XTR-176412">
    <property type="pathway name" value="Phosphorylation of the APC/C"/>
</dbReference>
<dbReference type="Reactome" id="R-XTR-176417">
    <property type="pathway name" value="Phosphorylation of Emi1"/>
</dbReference>
<dbReference type="Reactome" id="R-XTR-2467813">
    <property type="pathway name" value="Separation of Sister Chromatids"/>
</dbReference>
<dbReference type="Reactome" id="R-XTR-2500257">
    <property type="pathway name" value="Resolution of Sister Chromatid Cohesion"/>
</dbReference>
<dbReference type="Reactome" id="R-XTR-2565942">
    <property type="pathway name" value="Regulation of PLK1 Activity at G2/M Transition"/>
</dbReference>
<dbReference type="Reactome" id="R-XTR-380259">
    <property type="pathway name" value="Loss of Nlp from mitotic centrosomes"/>
</dbReference>
<dbReference type="Reactome" id="R-XTR-380270">
    <property type="pathway name" value="Recruitment of mitotic centrosome proteins and complexes"/>
</dbReference>
<dbReference type="Reactome" id="R-XTR-380320">
    <property type="pathway name" value="Recruitment of NuMA to mitotic centrosomes"/>
</dbReference>
<dbReference type="Reactome" id="R-XTR-5620912">
    <property type="pathway name" value="Anchoring of the basal body to the plasma membrane"/>
</dbReference>
<dbReference type="Reactome" id="R-XTR-5663220">
    <property type="pathway name" value="RHO GTPases Activate Formins"/>
</dbReference>
<dbReference type="Reactome" id="R-XTR-68877">
    <property type="pathway name" value="Mitotic Prometaphase"/>
</dbReference>
<dbReference type="Reactome" id="R-XTR-68881">
    <property type="pathway name" value="Mitotic Metaphase/Anaphase Transition"/>
</dbReference>
<dbReference type="Reactome" id="R-XTR-68884">
    <property type="pathway name" value="Mitotic Telophase/Cytokinesis"/>
</dbReference>
<dbReference type="Reactome" id="R-XTR-69273">
    <property type="pathway name" value="Cyclin A/B1/B2 associated events during G2/M transition"/>
</dbReference>
<dbReference type="Reactome" id="R-XTR-8852276">
    <property type="pathway name" value="The role of GTSE1 in G2/M progression after G2 checkpoint"/>
</dbReference>
<dbReference type="Reactome" id="R-XTR-8854518">
    <property type="pathway name" value="AURKA Activation by TPX2"/>
</dbReference>
<dbReference type="Reactome" id="R-XTR-9648025">
    <property type="pathway name" value="EML4 and NUDC in mitotic spindle formation"/>
</dbReference>
<dbReference type="Proteomes" id="UP000008143">
    <property type="component" value="Chromosome 9"/>
</dbReference>
<dbReference type="Bgee" id="ENSXETG00000010344">
    <property type="expression patterns" value="Expressed in 2-cell stage embryo and 8 other cell types or tissues"/>
</dbReference>
<dbReference type="GO" id="GO:0005813">
    <property type="term" value="C:centrosome"/>
    <property type="evidence" value="ECO:0000250"/>
    <property type="project" value="UniProtKB"/>
</dbReference>
<dbReference type="GO" id="GO:0005737">
    <property type="term" value="C:cytoplasm"/>
    <property type="evidence" value="ECO:0007669"/>
    <property type="project" value="UniProtKB-KW"/>
</dbReference>
<dbReference type="GO" id="GO:0000776">
    <property type="term" value="C:kinetochore"/>
    <property type="evidence" value="ECO:0000250"/>
    <property type="project" value="UniProtKB"/>
</dbReference>
<dbReference type="GO" id="GO:0030496">
    <property type="term" value="C:midbody"/>
    <property type="evidence" value="ECO:0000250"/>
    <property type="project" value="UniProtKB"/>
</dbReference>
<dbReference type="GO" id="GO:0005634">
    <property type="term" value="C:nucleus"/>
    <property type="evidence" value="ECO:0000250"/>
    <property type="project" value="UniProtKB"/>
</dbReference>
<dbReference type="GO" id="GO:0005819">
    <property type="term" value="C:spindle"/>
    <property type="evidence" value="ECO:0007669"/>
    <property type="project" value="UniProtKB-SubCell"/>
</dbReference>
<dbReference type="GO" id="GO:0005524">
    <property type="term" value="F:ATP binding"/>
    <property type="evidence" value="ECO:0007669"/>
    <property type="project" value="UniProtKB-KW"/>
</dbReference>
<dbReference type="GO" id="GO:0106310">
    <property type="term" value="F:protein serine kinase activity"/>
    <property type="evidence" value="ECO:0007669"/>
    <property type="project" value="RHEA"/>
</dbReference>
<dbReference type="GO" id="GO:0004674">
    <property type="term" value="F:protein serine/threonine kinase activity"/>
    <property type="evidence" value="ECO:0000250"/>
    <property type="project" value="UniProtKB"/>
</dbReference>
<dbReference type="GO" id="GO:0051301">
    <property type="term" value="P:cell division"/>
    <property type="evidence" value="ECO:0007669"/>
    <property type="project" value="UniProtKB-KW"/>
</dbReference>
<dbReference type="GO" id="GO:0000278">
    <property type="term" value="P:mitotic cell cycle"/>
    <property type="evidence" value="ECO:0000250"/>
    <property type="project" value="UniProtKB"/>
</dbReference>
<dbReference type="GO" id="GO:0007095">
    <property type="term" value="P:mitotic G2 DNA damage checkpoint signaling"/>
    <property type="evidence" value="ECO:0000250"/>
    <property type="project" value="UniProtKB"/>
</dbReference>
<dbReference type="GO" id="GO:2000042">
    <property type="term" value="P:negative regulation of double-strand break repair via homologous recombination"/>
    <property type="evidence" value="ECO:0000250"/>
    <property type="project" value="UniProtKB"/>
</dbReference>
<dbReference type="GO" id="GO:0071168">
    <property type="term" value="P:protein localization to chromatin"/>
    <property type="evidence" value="ECO:0000250"/>
    <property type="project" value="UniProtKB"/>
</dbReference>
<dbReference type="GO" id="GO:0006468">
    <property type="term" value="P:protein phosphorylation"/>
    <property type="evidence" value="ECO:0000250"/>
    <property type="project" value="UniProtKB"/>
</dbReference>
<dbReference type="CDD" id="cd13118">
    <property type="entry name" value="POLO_box_1"/>
    <property type="match status" value="1"/>
</dbReference>
<dbReference type="CDD" id="cd13117">
    <property type="entry name" value="POLO_box_2"/>
    <property type="match status" value="1"/>
</dbReference>
<dbReference type="CDD" id="cd14187">
    <property type="entry name" value="STKc_PLK1"/>
    <property type="match status" value="1"/>
</dbReference>
<dbReference type="FunFam" id="1.10.510.10:FF:000727">
    <property type="entry name" value="Serine/threonine-protein kinase PLK"/>
    <property type="match status" value="1"/>
</dbReference>
<dbReference type="FunFam" id="3.30.1120.30:FF:000003">
    <property type="entry name" value="Serine/threonine-protein kinase PLK"/>
    <property type="match status" value="1"/>
</dbReference>
<dbReference type="FunFam" id="3.30.200.20:FF:000284">
    <property type="entry name" value="Serine/threonine-protein kinase PLK"/>
    <property type="match status" value="1"/>
</dbReference>
<dbReference type="Gene3D" id="3.30.200.20">
    <property type="entry name" value="Phosphorylase Kinase, domain 1"/>
    <property type="match status" value="1"/>
</dbReference>
<dbReference type="Gene3D" id="3.30.1120.30">
    <property type="entry name" value="POLO box domain"/>
    <property type="match status" value="2"/>
</dbReference>
<dbReference type="Gene3D" id="1.10.510.10">
    <property type="entry name" value="Transferase(Phosphotransferase) domain 1"/>
    <property type="match status" value="1"/>
</dbReference>
<dbReference type="InterPro" id="IPR011009">
    <property type="entry name" value="Kinase-like_dom_sf"/>
</dbReference>
<dbReference type="InterPro" id="IPR033702">
    <property type="entry name" value="PLK1_cat"/>
</dbReference>
<dbReference type="InterPro" id="IPR033701">
    <property type="entry name" value="POLO_box_1"/>
</dbReference>
<dbReference type="InterPro" id="IPR033695">
    <property type="entry name" value="POLO_box_2"/>
</dbReference>
<dbReference type="InterPro" id="IPR000959">
    <property type="entry name" value="POLO_box_dom"/>
</dbReference>
<dbReference type="InterPro" id="IPR036947">
    <property type="entry name" value="POLO_box_dom_sf"/>
</dbReference>
<dbReference type="InterPro" id="IPR000719">
    <property type="entry name" value="Prot_kinase_dom"/>
</dbReference>
<dbReference type="InterPro" id="IPR017441">
    <property type="entry name" value="Protein_kinase_ATP_BS"/>
</dbReference>
<dbReference type="InterPro" id="IPR008271">
    <property type="entry name" value="Ser/Thr_kinase_AS"/>
</dbReference>
<dbReference type="PANTHER" id="PTHR24345">
    <property type="entry name" value="SERINE/THREONINE-PROTEIN KINASE PLK"/>
    <property type="match status" value="1"/>
</dbReference>
<dbReference type="PANTHER" id="PTHR24345:SF93">
    <property type="entry name" value="SERINE_THREONINE-PROTEIN KINASE PLK1"/>
    <property type="match status" value="1"/>
</dbReference>
<dbReference type="Pfam" id="PF00069">
    <property type="entry name" value="Pkinase"/>
    <property type="match status" value="1"/>
</dbReference>
<dbReference type="Pfam" id="PF00659">
    <property type="entry name" value="POLO_box"/>
    <property type="match status" value="2"/>
</dbReference>
<dbReference type="SMART" id="SM00220">
    <property type="entry name" value="S_TKc"/>
    <property type="match status" value="1"/>
</dbReference>
<dbReference type="SUPFAM" id="SSF82615">
    <property type="entry name" value="Polo-box domain"/>
    <property type="match status" value="2"/>
</dbReference>
<dbReference type="SUPFAM" id="SSF56112">
    <property type="entry name" value="Protein kinase-like (PK-like)"/>
    <property type="match status" value="1"/>
</dbReference>
<dbReference type="PROSITE" id="PS50078">
    <property type="entry name" value="POLO_BOX"/>
    <property type="match status" value="2"/>
</dbReference>
<dbReference type="PROSITE" id="PS00107">
    <property type="entry name" value="PROTEIN_KINASE_ATP"/>
    <property type="match status" value="1"/>
</dbReference>
<dbReference type="PROSITE" id="PS50011">
    <property type="entry name" value="PROTEIN_KINASE_DOM"/>
    <property type="match status" value="1"/>
</dbReference>
<dbReference type="PROSITE" id="PS00108">
    <property type="entry name" value="PROTEIN_KINASE_ST"/>
    <property type="match status" value="1"/>
</dbReference>
<keyword id="KW-0067">ATP-binding</keyword>
<keyword id="KW-0131">Cell cycle</keyword>
<keyword id="KW-0132">Cell division</keyword>
<keyword id="KW-0963">Cytoplasm</keyword>
<keyword id="KW-0206">Cytoskeleton</keyword>
<keyword id="KW-0418">Kinase</keyword>
<keyword id="KW-0498">Mitosis</keyword>
<keyword id="KW-0547">Nucleotide-binding</keyword>
<keyword id="KW-0539">Nucleus</keyword>
<keyword id="KW-0597">Phosphoprotein</keyword>
<keyword id="KW-1185">Reference proteome</keyword>
<keyword id="KW-0677">Repeat</keyword>
<keyword id="KW-0723">Serine/threonine-protein kinase</keyword>
<keyword id="KW-0808">Transferase</keyword>
<gene>
    <name type="primary">plk1</name>
</gene>
<comment type="function">
    <text evidence="1">Plays multiple essential roles during mitosis. Phosphorylates the N-terminal domain of cdc25, which leads to cyclin b-cdc2 activation and mitotic entry. Also required for organization of bipolar spindles, and for exit from mitosis. Phosphorylates tpx2 (By similarity).</text>
</comment>
<comment type="catalytic activity">
    <reaction>
        <text>L-seryl-[protein] + ATP = O-phospho-L-seryl-[protein] + ADP + H(+)</text>
        <dbReference type="Rhea" id="RHEA:17989"/>
        <dbReference type="Rhea" id="RHEA-COMP:9863"/>
        <dbReference type="Rhea" id="RHEA-COMP:11604"/>
        <dbReference type="ChEBI" id="CHEBI:15378"/>
        <dbReference type="ChEBI" id="CHEBI:29999"/>
        <dbReference type="ChEBI" id="CHEBI:30616"/>
        <dbReference type="ChEBI" id="CHEBI:83421"/>
        <dbReference type="ChEBI" id="CHEBI:456216"/>
        <dbReference type="EC" id="2.7.11.21"/>
    </reaction>
</comment>
<comment type="catalytic activity">
    <reaction>
        <text>L-threonyl-[protein] + ATP = O-phospho-L-threonyl-[protein] + ADP + H(+)</text>
        <dbReference type="Rhea" id="RHEA:46608"/>
        <dbReference type="Rhea" id="RHEA-COMP:11060"/>
        <dbReference type="Rhea" id="RHEA-COMP:11605"/>
        <dbReference type="ChEBI" id="CHEBI:15378"/>
        <dbReference type="ChEBI" id="CHEBI:30013"/>
        <dbReference type="ChEBI" id="CHEBI:30616"/>
        <dbReference type="ChEBI" id="CHEBI:61977"/>
        <dbReference type="ChEBI" id="CHEBI:456216"/>
        <dbReference type="EC" id="2.7.11.21"/>
    </reaction>
</comment>
<comment type="subunit">
    <text evidence="2">Interacts with plk1 and kif2a. Interacts with fbxo5.</text>
</comment>
<comment type="subcellular location">
    <subcellularLocation>
        <location evidence="1">Nucleus</location>
    </subcellularLocation>
    <subcellularLocation>
        <location evidence="1">Cytoplasm</location>
        <location evidence="1">Cytoskeleton</location>
        <location evidence="1">Microtubule organizing center</location>
        <location evidence="1">Centrosome</location>
    </subcellularLocation>
    <subcellularLocation>
        <location evidence="1">Cytoplasm</location>
        <location evidence="1">Cytoskeleton</location>
        <location evidence="1">Spindle</location>
    </subcellularLocation>
    <subcellularLocation>
        <location evidence="1">Midbody</location>
    </subcellularLocation>
    <text evidence="1">Localized at centrosomes at prophase, spindles at metaphase, and at the midbody during cytokinesis.</text>
</comment>
<comment type="PTM">
    <text evidence="1">Activated by phosphorylation on Thr-201 during M phase.</text>
</comment>
<comment type="PTM">
    <text evidence="1">Protein levels are down-regulated by proteasomal degradation in anaphase.</text>
</comment>
<comment type="similarity">
    <text evidence="4">Belongs to the protein kinase superfamily. Ser/Thr protein kinase family.</text>
</comment>
<organism>
    <name type="scientific">Xenopus tropicalis</name>
    <name type="common">Western clawed frog</name>
    <name type="synonym">Silurana tropicalis</name>
    <dbReference type="NCBI Taxonomy" id="8364"/>
    <lineage>
        <taxon>Eukaryota</taxon>
        <taxon>Metazoa</taxon>
        <taxon>Chordata</taxon>
        <taxon>Craniata</taxon>
        <taxon>Vertebrata</taxon>
        <taxon>Euteleostomi</taxon>
        <taxon>Amphibia</taxon>
        <taxon>Batrachia</taxon>
        <taxon>Anura</taxon>
        <taxon>Pipoidea</taxon>
        <taxon>Pipidae</taxon>
        <taxon>Xenopodinae</taxon>
        <taxon>Xenopus</taxon>
        <taxon>Silurana</taxon>
    </lineage>
</organism>
<name>PLK1_XENTR</name>
<protein>
    <recommendedName>
        <fullName>Serine/threonine-protein kinase PLK1</fullName>
        <ecNumber>2.7.11.21</ecNumber>
    </recommendedName>
    <alternativeName>
        <fullName>Plx1</fullName>
    </alternativeName>
    <alternativeName>
        <fullName>Polo-like kinase 1</fullName>
        <shortName>PLK-1</shortName>
    </alternativeName>
</protein>
<feature type="chain" id="PRO_0000086560" description="Serine/threonine-protein kinase PLK1">
    <location>
        <begin position="1"/>
        <end position="598"/>
    </location>
</feature>
<feature type="domain" description="Protein kinase" evidence="4">
    <location>
        <begin position="44"/>
        <end position="296"/>
    </location>
</feature>
<feature type="domain" description="POLO box 1" evidence="3">
    <location>
        <begin position="404"/>
        <end position="482"/>
    </location>
</feature>
<feature type="domain" description="POLO box 2" evidence="3">
    <location>
        <begin position="504"/>
        <end position="586"/>
    </location>
</feature>
<feature type="region of interest" description="Disordered" evidence="6">
    <location>
        <begin position="1"/>
        <end position="26"/>
    </location>
</feature>
<feature type="region of interest" description="Activation loop" evidence="1">
    <location>
        <begin position="185"/>
        <end position="212"/>
    </location>
</feature>
<feature type="region of interest" description="Disordered" evidence="6">
    <location>
        <begin position="336"/>
        <end position="360"/>
    </location>
</feature>
<feature type="region of interest" description="Linker" evidence="1">
    <location>
        <begin position="487"/>
        <end position="501"/>
    </location>
</feature>
<feature type="region of interest" description="Important for interaction with phosphorylated proteins" evidence="1">
    <location>
        <begin position="532"/>
        <end position="534"/>
    </location>
</feature>
<feature type="short sequence motif" description="D-box that targets the protein for proteasomal degradation in anaphase" evidence="1">
    <location>
        <begin position="328"/>
        <end position="331"/>
    </location>
</feature>
<feature type="active site" description="Proton acceptor" evidence="4 5">
    <location>
        <position position="167"/>
    </location>
</feature>
<feature type="binding site" evidence="4">
    <location>
        <begin position="50"/>
        <end position="58"/>
    </location>
    <ligand>
        <name>ATP</name>
        <dbReference type="ChEBI" id="CHEBI:30616"/>
    </ligand>
</feature>
<feature type="binding site" evidence="4">
    <location>
        <position position="73"/>
    </location>
    <ligand>
        <name>ATP</name>
        <dbReference type="ChEBI" id="CHEBI:30616"/>
    </ligand>
</feature>
<feature type="binding site" evidence="4">
    <location>
        <position position="122"/>
    </location>
    <ligand>
        <name>ATP</name>
        <dbReference type="ChEBI" id="CHEBI:30616"/>
    </ligand>
</feature>
<feature type="binding site" evidence="4">
    <location>
        <begin position="169"/>
        <end position="172"/>
    </location>
    <ligand>
        <name>ATP</name>
        <dbReference type="ChEBI" id="CHEBI:30616"/>
    </ligand>
</feature>
<feature type="binding site" evidence="4">
    <location>
        <position position="185"/>
    </location>
    <ligand>
        <name>ATP</name>
        <dbReference type="ChEBI" id="CHEBI:30616"/>
    </ligand>
</feature>
<feature type="modified residue" description="Phosphoserine" evidence="1">
    <location>
        <position position="25"/>
    </location>
</feature>
<feature type="modified residue" description="Phosphoserine" evidence="1">
    <location>
        <position position="26"/>
    </location>
</feature>
<feature type="modified residue" description="Phosphothreonine" evidence="1">
    <location>
        <position position="201"/>
    </location>
</feature>
<feature type="modified residue" description="Phosphoserine; by autocatalysis" evidence="1">
    <location>
        <position position="260"/>
    </location>
</feature>
<feature type="modified residue" description="Phosphoserine; by autocatalysis" evidence="1">
    <location>
        <position position="326"/>
    </location>
</feature>
<feature type="modified residue" description="Phosphoserine" evidence="1">
    <location>
        <position position="340"/>
    </location>
</feature>